<protein>
    <recommendedName>
        <fullName evidence="1">Lipoyl synthase, mitochondrial</fullName>
        <ecNumber evidence="1">2.8.1.8</ecNumber>
    </recommendedName>
    <alternativeName>
        <fullName evidence="1">Lipoate synthase</fullName>
        <shortName evidence="1">LS</shortName>
        <shortName evidence="1">Lip-syn</shortName>
    </alternativeName>
    <alternativeName>
        <fullName evidence="1">Lipoic acid synthase</fullName>
    </alternativeName>
</protein>
<reference key="1">
    <citation type="journal article" date="2009" name="PLoS Genet.">
        <title>Sequencing, mapping, and analysis of 27,455 maize full-length cDNAs.</title>
        <authorList>
            <person name="Soderlund C."/>
            <person name="Descour A."/>
            <person name="Kudrna D."/>
            <person name="Bomhoff M."/>
            <person name="Boyd L."/>
            <person name="Currie J."/>
            <person name="Angelova A."/>
            <person name="Collura K."/>
            <person name="Wissotski M."/>
            <person name="Ashley E."/>
            <person name="Morrow D."/>
            <person name="Fernandes J."/>
            <person name="Walbot V."/>
            <person name="Yu Y."/>
        </authorList>
    </citation>
    <scope>NUCLEOTIDE SEQUENCE [LARGE SCALE MRNA]</scope>
    <source>
        <strain>B73</strain>
    </source>
</reference>
<dbReference type="EC" id="2.8.1.8" evidence="1"/>
<dbReference type="EMBL" id="BT054923">
    <property type="protein sequence ID" value="ACL53530.1"/>
    <property type="molecule type" value="mRNA"/>
</dbReference>
<dbReference type="EMBL" id="BT061114">
    <property type="protein sequence ID" value="ACN25811.1"/>
    <property type="molecule type" value="mRNA"/>
</dbReference>
<dbReference type="EMBL" id="BT086520">
    <property type="protein sequence ID" value="ACR36873.1"/>
    <property type="molecule type" value="mRNA"/>
</dbReference>
<dbReference type="RefSeq" id="NP_001146235.1">
    <property type="nucleotide sequence ID" value="NM_001152763.1"/>
</dbReference>
<dbReference type="SMR" id="B8A031"/>
<dbReference type="FunCoup" id="B8A031">
    <property type="interactions" value="1418"/>
</dbReference>
<dbReference type="STRING" id="4577.B8A031"/>
<dbReference type="PaxDb" id="4577-GRMZM2G071714_P01"/>
<dbReference type="EnsemblPlants" id="Zm00001eb081090_T001">
    <property type="protein sequence ID" value="Zm00001eb081090_P001"/>
    <property type="gene ID" value="Zm00001eb081090"/>
</dbReference>
<dbReference type="GeneID" id="100279807"/>
<dbReference type="Gramene" id="Zm00001eb081090_T001">
    <property type="protein sequence ID" value="Zm00001eb081090_P001"/>
    <property type="gene ID" value="Zm00001eb081090"/>
</dbReference>
<dbReference type="KEGG" id="zma:100279807"/>
<dbReference type="eggNOG" id="KOG2672">
    <property type="taxonomic scope" value="Eukaryota"/>
</dbReference>
<dbReference type="HOGENOM" id="CLU_033144_2_0_1"/>
<dbReference type="InParanoid" id="B8A031"/>
<dbReference type="OMA" id="PYCDIDF"/>
<dbReference type="OrthoDB" id="3231at2759"/>
<dbReference type="UniPathway" id="UPA00538">
    <property type="reaction ID" value="UER00593"/>
</dbReference>
<dbReference type="Proteomes" id="UP000007305">
    <property type="component" value="Chromosome 2"/>
</dbReference>
<dbReference type="ExpressionAtlas" id="B8A031">
    <property type="expression patterns" value="baseline and differential"/>
</dbReference>
<dbReference type="GO" id="GO:0005759">
    <property type="term" value="C:mitochondrial matrix"/>
    <property type="evidence" value="ECO:0007669"/>
    <property type="project" value="EnsemblPlants"/>
</dbReference>
<dbReference type="GO" id="GO:0005739">
    <property type="term" value="C:mitochondrion"/>
    <property type="evidence" value="ECO:0000318"/>
    <property type="project" value="GO_Central"/>
</dbReference>
<dbReference type="GO" id="GO:0051539">
    <property type="term" value="F:4 iron, 4 sulfur cluster binding"/>
    <property type="evidence" value="ECO:0007669"/>
    <property type="project" value="UniProtKB-UniRule"/>
</dbReference>
<dbReference type="GO" id="GO:0016992">
    <property type="term" value="F:lipoate synthase activity"/>
    <property type="evidence" value="ECO:0000318"/>
    <property type="project" value="GO_Central"/>
</dbReference>
<dbReference type="GO" id="GO:0046872">
    <property type="term" value="F:metal ion binding"/>
    <property type="evidence" value="ECO:0007669"/>
    <property type="project" value="UniProtKB-KW"/>
</dbReference>
<dbReference type="GO" id="GO:0009107">
    <property type="term" value="P:lipoate biosynthetic process"/>
    <property type="evidence" value="ECO:0000318"/>
    <property type="project" value="GO_Central"/>
</dbReference>
<dbReference type="CDD" id="cd01335">
    <property type="entry name" value="Radical_SAM"/>
    <property type="match status" value="1"/>
</dbReference>
<dbReference type="FunFam" id="3.20.20.70:FF:000125">
    <property type="entry name" value="Lipoyl synthase, mitochondrial"/>
    <property type="match status" value="1"/>
</dbReference>
<dbReference type="Gene3D" id="3.20.20.70">
    <property type="entry name" value="Aldolase class I"/>
    <property type="match status" value="1"/>
</dbReference>
<dbReference type="HAMAP" id="MF_00206">
    <property type="entry name" value="Lipoyl_synth"/>
    <property type="match status" value="1"/>
</dbReference>
<dbReference type="HAMAP" id="MF_03128">
    <property type="entry name" value="Lipoyl_synth_plantM"/>
    <property type="match status" value="1"/>
</dbReference>
<dbReference type="InterPro" id="IPR013785">
    <property type="entry name" value="Aldolase_TIM"/>
</dbReference>
<dbReference type="InterPro" id="IPR006638">
    <property type="entry name" value="Elp3/MiaA/NifB-like_rSAM"/>
</dbReference>
<dbReference type="InterPro" id="IPR031691">
    <property type="entry name" value="LIAS_N"/>
</dbReference>
<dbReference type="InterPro" id="IPR003698">
    <property type="entry name" value="Lipoyl_synth"/>
</dbReference>
<dbReference type="InterPro" id="IPR027527">
    <property type="entry name" value="Lipoyl_synth_mt"/>
</dbReference>
<dbReference type="InterPro" id="IPR007197">
    <property type="entry name" value="rSAM"/>
</dbReference>
<dbReference type="NCBIfam" id="TIGR00510">
    <property type="entry name" value="lipA"/>
    <property type="match status" value="1"/>
</dbReference>
<dbReference type="NCBIfam" id="NF004019">
    <property type="entry name" value="PRK05481.1"/>
    <property type="match status" value="1"/>
</dbReference>
<dbReference type="NCBIfam" id="NF009544">
    <property type="entry name" value="PRK12928.1"/>
    <property type="match status" value="1"/>
</dbReference>
<dbReference type="PANTHER" id="PTHR10949">
    <property type="entry name" value="LIPOYL SYNTHASE"/>
    <property type="match status" value="1"/>
</dbReference>
<dbReference type="PANTHER" id="PTHR10949:SF0">
    <property type="entry name" value="LIPOYL SYNTHASE, MITOCHONDRIAL"/>
    <property type="match status" value="1"/>
</dbReference>
<dbReference type="Pfam" id="PF16881">
    <property type="entry name" value="LIAS_N"/>
    <property type="match status" value="1"/>
</dbReference>
<dbReference type="Pfam" id="PF04055">
    <property type="entry name" value="Radical_SAM"/>
    <property type="match status" value="1"/>
</dbReference>
<dbReference type="SFLD" id="SFLDF00271">
    <property type="entry name" value="lipoyl_synthase"/>
    <property type="match status" value="1"/>
</dbReference>
<dbReference type="SFLD" id="SFLDS00029">
    <property type="entry name" value="Radical_SAM"/>
    <property type="match status" value="1"/>
</dbReference>
<dbReference type="SMART" id="SM00729">
    <property type="entry name" value="Elp3"/>
    <property type="match status" value="1"/>
</dbReference>
<dbReference type="SUPFAM" id="SSF102114">
    <property type="entry name" value="Radical SAM enzymes"/>
    <property type="match status" value="1"/>
</dbReference>
<dbReference type="PROSITE" id="PS51918">
    <property type="entry name" value="RADICAL_SAM"/>
    <property type="match status" value="1"/>
</dbReference>
<sequence length="383" mass="41886">MHGRRHLAASLTRALIQAPSRSISSTPSLLQTLDPSVPSPPAAGAGRLAELRRRLQADAPSLGDFTYSVEVGTRQRPLPKPKWMKETVPGGAKYAAIKAKLRELKLHTVCEEARCPNLGECWSGGETGTATATIMILGDTCTRGCRFCNVKTSRTPPPPDPDEPSNVAQAIASWGLEYIVITSVDRDDLPDQGSGHFAETVQKLKALKPEMLIEALVPDFRGDPSCVEKVATSGLHVFAHNIETVEELQRNVRDYRANFKQSIDVLEMAKEYAPPGTLTKTSIMLGCGETPDQVIRTMEKVRAADVDVITFGQYMRPSKRHMPVSEYVTPEAFEKYRALGVEMGFRYVASGPMVRSSYKAGEFYIKAMIEAERAKGTAADSSA</sequence>
<accession>B8A031</accession>
<name>LIAS_MAIZE</name>
<keyword id="KW-0004">4Fe-4S</keyword>
<keyword id="KW-0408">Iron</keyword>
<keyword id="KW-0411">Iron-sulfur</keyword>
<keyword id="KW-0479">Metal-binding</keyword>
<keyword id="KW-0496">Mitochondrion</keyword>
<keyword id="KW-1185">Reference proteome</keyword>
<keyword id="KW-0949">S-adenosyl-L-methionine</keyword>
<keyword id="KW-0808">Transferase</keyword>
<organism>
    <name type="scientific">Zea mays</name>
    <name type="common">Maize</name>
    <dbReference type="NCBI Taxonomy" id="4577"/>
    <lineage>
        <taxon>Eukaryota</taxon>
        <taxon>Viridiplantae</taxon>
        <taxon>Streptophyta</taxon>
        <taxon>Embryophyta</taxon>
        <taxon>Tracheophyta</taxon>
        <taxon>Spermatophyta</taxon>
        <taxon>Magnoliopsida</taxon>
        <taxon>Liliopsida</taxon>
        <taxon>Poales</taxon>
        <taxon>Poaceae</taxon>
        <taxon>PACMAD clade</taxon>
        <taxon>Panicoideae</taxon>
        <taxon>Andropogonodae</taxon>
        <taxon>Andropogoneae</taxon>
        <taxon>Tripsacinae</taxon>
        <taxon>Zea</taxon>
    </lineage>
</organism>
<proteinExistence type="evidence at transcript level"/>
<feature type="chain" id="PRO_0000398846" description="Lipoyl synthase, mitochondrial">
    <location>
        <begin position="1"/>
        <end position="383"/>
    </location>
</feature>
<feature type="domain" description="Radical SAM core" evidence="2">
    <location>
        <begin position="126"/>
        <end position="346"/>
    </location>
</feature>
<feature type="region of interest" description="Disordered" evidence="3">
    <location>
        <begin position="25"/>
        <end position="44"/>
    </location>
</feature>
<feature type="compositionally biased region" description="Polar residues" evidence="3">
    <location>
        <begin position="25"/>
        <end position="34"/>
    </location>
</feature>
<feature type="binding site" evidence="1">
    <location>
        <position position="110"/>
    </location>
    <ligand>
        <name>[4Fe-4S] cluster</name>
        <dbReference type="ChEBI" id="CHEBI:49883"/>
        <label>1</label>
    </ligand>
</feature>
<feature type="binding site" evidence="1">
    <location>
        <position position="115"/>
    </location>
    <ligand>
        <name>[4Fe-4S] cluster</name>
        <dbReference type="ChEBI" id="CHEBI:49883"/>
        <label>1</label>
    </ligand>
</feature>
<feature type="binding site" evidence="1">
    <location>
        <position position="121"/>
    </location>
    <ligand>
        <name>[4Fe-4S] cluster</name>
        <dbReference type="ChEBI" id="CHEBI:49883"/>
        <label>1</label>
    </ligand>
</feature>
<feature type="binding site" evidence="1">
    <location>
        <position position="141"/>
    </location>
    <ligand>
        <name>[4Fe-4S] cluster</name>
        <dbReference type="ChEBI" id="CHEBI:49883"/>
        <label>2</label>
        <note>4Fe-4S-S-AdoMet</note>
    </ligand>
</feature>
<feature type="binding site" evidence="1">
    <location>
        <position position="145"/>
    </location>
    <ligand>
        <name>[4Fe-4S] cluster</name>
        <dbReference type="ChEBI" id="CHEBI:49883"/>
        <label>2</label>
        <note>4Fe-4S-S-AdoMet</note>
    </ligand>
</feature>
<feature type="binding site" evidence="1">
    <location>
        <position position="148"/>
    </location>
    <ligand>
        <name>[4Fe-4S] cluster</name>
        <dbReference type="ChEBI" id="CHEBI:49883"/>
        <label>2</label>
        <note>4Fe-4S-S-AdoMet</note>
    </ligand>
</feature>
<feature type="binding site" evidence="1">
    <location>
        <position position="357"/>
    </location>
    <ligand>
        <name>[4Fe-4S] cluster</name>
        <dbReference type="ChEBI" id="CHEBI:49883"/>
        <label>1</label>
    </ligand>
</feature>
<evidence type="ECO:0000255" key="1">
    <source>
        <dbReference type="HAMAP-Rule" id="MF_03128"/>
    </source>
</evidence>
<evidence type="ECO:0000255" key="2">
    <source>
        <dbReference type="PROSITE-ProRule" id="PRU01266"/>
    </source>
</evidence>
<evidence type="ECO:0000256" key="3">
    <source>
        <dbReference type="SAM" id="MobiDB-lite"/>
    </source>
</evidence>
<comment type="function">
    <text evidence="1">Catalyzes the radical-mediated insertion of two sulfur atoms into the C-6 and C-8 positions of the octanoyl moiety bound to the lipoyl domains of lipoate-dependent enzymes, thereby converting the octanoylated domains into lipoylated derivatives.</text>
</comment>
<comment type="catalytic activity">
    <reaction evidence="1">
        <text>[[Fe-S] cluster scaffold protein carrying a second [4Fe-4S](2+) cluster] + N(6)-octanoyl-L-lysyl-[protein] + 2 oxidized [2Fe-2S]-[ferredoxin] + 2 S-adenosyl-L-methionine + 4 H(+) = [[Fe-S] cluster scaffold protein] + N(6)-[(R)-dihydrolipoyl]-L-lysyl-[protein] + 4 Fe(3+) + 2 hydrogen sulfide + 2 5'-deoxyadenosine + 2 L-methionine + 2 reduced [2Fe-2S]-[ferredoxin]</text>
        <dbReference type="Rhea" id="RHEA:16585"/>
        <dbReference type="Rhea" id="RHEA-COMP:9928"/>
        <dbReference type="Rhea" id="RHEA-COMP:10000"/>
        <dbReference type="Rhea" id="RHEA-COMP:10001"/>
        <dbReference type="Rhea" id="RHEA-COMP:10475"/>
        <dbReference type="Rhea" id="RHEA-COMP:14568"/>
        <dbReference type="Rhea" id="RHEA-COMP:14569"/>
        <dbReference type="ChEBI" id="CHEBI:15378"/>
        <dbReference type="ChEBI" id="CHEBI:17319"/>
        <dbReference type="ChEBI" id="CHEBI:29034"/>
        <dbReference type="ChEBI" id="CHEBI:29919"/>
        <dbReference type="ChEBI" id="CHEBI:33722"/>
        <dbReference type="ChEBI" id="CHEBI:33737"/>
        <dbReference type="ChEBI" id="CHEBI:33738"/>
        <dbReference type="ChEBI" id="CHEBI:57844"/>
        <dbReference type="ChEBI" id="CHEBI:59789"/>
        <dbReference type="ChEBI" id="CHEBI:78809"/>
        <dbReference type="ChEBI" id="CHEBI:83100"/>
        <dbReference type="EC" id="2.8.1.8"/>
    </reaction>
</comment>
<comment type="cofactor">
    <cofactor evidence="1">
        <name>[4Fe-4S] cluster</name>
        <dbReference type="ChEBI" id="CHEBI:49883"/>
    </cofactor>
    <text evidence="1">Binds 2 [4Fe-4S] clusters per subunit. One cluster is coordinated with 3 cysteines and an exchangeable S-adenosyl-L-methionine.</text>
</comment>
<comment type="pathway">
    <text evidence="1">Protein modification; protein lipoylation via endogenous pathway; protein N(6)-(lipoyl)lysine from octanoyl-[acyl-carrier-protein]: step 2/2.</text>
</comment>
<comment type="subcellular location">
    <subcellularLocation>
        <location evidence="1">Mitochondrion</location>
    </subcellularLocation>
</comment>
<comment type="miscellaneous">
    <text evidence="1">This protein may be expected to contain an N-terminal transit peptide but none has been predicted.</text>
</comment>
<comment type="similarity">
    <text evidence="1">Belongs to the radical SAM superfamily. Lipoyl synthase family.</text>
</comment>
<gene>
    <name evidence="1" type="primary">LIP1</name>
</gene>